<evidence type="ECO:0000255" key="1">
    <source>
        <dbReference type="PROSITE-ProRule" id="PRU00108"/>
    </source>
</evidence>
<evidence type="ECO:0000256" key="2">
    <source>
        <dbReference type="SAM" id="MobiDB-lite"/>
    </source>
</evidence>
<evidence type="ECO:0000269" key="3">
    <source>
    </source>
</evidence>
<evidence type="ECO:0000269" key="4">
    <source>
    </source>
</evidence>
<evidence type="ECO:0000305" key="5"/>
<evidence type="ECO:0000312" key="6">
    <source>
        <dbReference type="WormBase" id="F55B12.1"/>
    </source>
</evidence>
<sequence>MSEKETPSPVLDVKKEKNEETGIDEEKSSEDDCSKRSKVKSNPSKFSVNSILSPLESLVRVQQQLLKMAASKSGTPGTNAGVPGAFPYGPGRLPGNYFAGPFPGYSGAQPNWYNGNDPRFAAAAALLPCSIDPVRSAINHQFSMSSMSQRRKRRVLFSQAQVYELERRFKQAKYLTAPEREQLANSIRLTPTQVKIWFQNHRYKCKRQEKEKAMSGLGHSEDGSSPPPDNDDDDDKYSIEMDDKDDEEEEESEKPVLKPSGVFGLPYPPNAAAAAAAAAAAFNFPFAAQGPNPAYYMRW</sequence>
<proteinExistence type="evidence at transcript level"/>
<feature type="chain" id="PRO_0000048995" description="Homeobox protein ceh-24">
    <location>
        <begin position="1"/>
        <end position="299"/>
    </location>
</feature>
<feature type="DNA-binding region" description="Homeobox" evidence="1">
    <location>
        <begin position="150"/>
        <end position="209"/>
    </location>
</feature>
<feature type="region of interest" description="Disordered" evidence="2">
    <location>
        <begin position="1"/>
        <end position="45"/>
    </location>
</feature>
<feature type="region of interest" description="Disordered" evidence="2">
    <location>
        <begin position="208"/>
        <end position="263"/>
    </location>
</feature>
<feature type="compositionally biased region" description="Basic and acidic residues" evidence="2">
    <location>
        <begin position="1"/>
        <end position="35"/>
    </location>
</feature>
<feature type="compositionally biased region" description="Acidic residues" evidence="2">
    <location>
        <begin position="242"/>
        <end position="252"/>
    </location>
</feature>
<feature type="sequence conflict" description="In Ref. 1; AAB81844." evidence="5" ref="1">
    <original>A</original>
    <variation>E</variation>
    <location>
        <position position="85"/>
    </location>
</feature>
<feature type="sequence conflict" description="In Ref. 1; AAB81844." evidence="5" ref="1">
    <original>AA</original>
    <variation>R</variation>
    <location>
        <begin position="276"/>
        <end position="277"/>
    </location>
</feature>
<accession>Q9NLC2</accession>
<accession>O17318</accession>
<name>HM24_CAEEL</name>
<keyword id="KW-0217">Developmental protein</keyword>
<keyword id="KW-0238">DNA-binding</keyword>
<keyword id="KW-0371">Homeobox</keyword>
<keyword id="KW-0524">Neurogenesis</keyword>
<keyword id="KW-0539">Nucleus</keyword>
<keyword id="KW-1185">Reference proteome</keyword>
<keyword id="KW-0804">Transcription</keyword>
<keyword id="KW-0805">Transcription regulation</keyword>
<reference key="1">
    <citation type="journal article" date="1998" name="Development">
        <title>Muscle and nerve-specific regulation of a novel NK-2 class homeodomain factor in Caenorhabditis elegans.</title>
        <authorList>
            <person name="Harfe B.D."/>
            <person name="Fire A."/>
        </authorList>
    </citation>
    <scope>NUCLEOTIDE SEQUENCE [MRNA]</scope>
    <scope>TISSUE SPECIFICITY</scope>
    <scope>DEVELOPMENTAL STAGE</scope>
    <scope>DISRUPTION PHENOTYPE</scope>
</reference>
<reference key="2">
    <citation type="journal article" date="1998" name="Science">
        <title>Genome sequence of the nematode C. elegans: a platform for investigating biology.</title>
        <authorList>
            <consortium name="The C. elegans sequencing consortium"/>
        </authorList>
    </citation>
    <scope>NUCLEOTIDE SEQUENCE [LARGE SCALE GENOMIC DNA]</scope>
    <source>
        <strain>Bristol N2</strain>
    </source>
</reference>
<reference key="3">
    <citation type="journal article" date="2017" name="Elife">
        <title>Analysis of the NK2 homeobox gene ceh-24 reveals sublateral motor neuron control of left-right turning during sleep.</title>
        <authorList>
            <person name="Schwarz J."/>
            <person name="Bringmann H."/>
        </authorList>
    </citation>
    <scope>FUNCTION</scope>
    <scope>TISSUE SPECIFICITY</scope>
    <scope>DISRUPTION PHENOTYPE</scope>
</reference>
<comment type="function">
    <text evidence="3">Probable transcriptional regulator that is required in neural development for the normal formation of sublateral cholinergic motor neuron processes. Plays a role in regulating the expression of acetylcholine transporter protein unc-17 in the sublateral processes. In particular, it is required in sublateral motor neurons for a left-right turning behavior that occurs during the lethargus phase of the normal sleep process called 'flipping'. During 'flipping' animals rotate 180 degrees about their longitudinal axis.</text>
</comment>
<comment type="subcellular location">
    <subcellularLocation>
        <location evidence="1">Nucleus</location>
    </subcellularLocation>
</comment>
<comment type="tissue specificity">
    <text evidence="3 4">Expressed in the 8 vulval muscles, 8-10 ventral neurons in the head and in the most posterior pharyngeal muscle cell, m8 (PubMed:9425137). Expressed in SIA, SIB and SMB sublateral motor neurons, and in muscles of the pharynx and vulva (PubMed:28244369).</text>
</comment>
<comment type="developmental stage">
    <text evidence="4">First expressed in the m8 pharyngeal muscle cell and in ventral head neurons in embryos 400 minutes after the first cell cleavage.</text>
</comment>
<comment type="disruption phenotype">
    <text evidence="3 4">Normal growth, coordination, egg-laying, mating, chemotaxis, pharyngeal pumping and VC neuron synapses as in wild-type animals (PubMed:9425137). Abnormal sleep behavior with mutant larvae displaying a reduced, if not absent, type of turning behavior called 'flipping' (PubMed:28244369). Irregular formation and extension of sublateral motor neuron processes (PubMed:28244369).</text>
</comment>
<comment type="similarity">
    <text evidence="5">Belongs to the NK-2 homeobox family.</text>
</comment>
<gene>
    <name evidence="6" type="primary">ceh-24</name>
    <name evidence="6" type="ORF">F55B12.1</name>
</gene>
<dbReference type="EMBL" id="AF026056">
    <property type="protein sequence ID" value="AAB81844.1"/>
    <property type="molecule type" value="mRNA"/>
</dbReference>
<dbReference type="EMBL" id="Z79757">
    <property type="protein sequence ID" value="CAB60999.1"/>
    <property type="molecule type" value="Genomic_DNA"/>
</dbReference>
<dbReference type="PIR" id="T22698">
    <property type="entry name" value="T22698"/>
</dbReference>
<dbReference type="PIR" id="T37251">
    <property type="entry name" value="T37251"/>
</dbReference>
<dbReference type="RefSeq" id="NP_506419.3">
    <property type="nucleotide sequence ID" value="NM_074018.4"/>
</dbReference>
<dbReference type="SMR" id="Q9NLC2"/>
<dbReference type="BioGRID" id="44891">
    <property type="interactions" value="4"/>
</dbReference>
<dbReference type="FunCoup" id="Q9NLC2">
    <property type="interactions" value="121"/>
</dbReference>
<dbReference type="IntAct" id="Q9NLC2">
    <property type="interactions" value="3"/>
</dbReference>
<dbReference type="STRING" id="6239.F55B12.1.1"/>
<dbReference type="PaxDb" id="6239-F55B12.1"/>
<dbReference type="EnsemblMetazoa" id="F55B12.1.1">
    <property type="protein sequence ID" value="F55B12.1.1"/>
    <property type="gene ID" value="WBGene00000447"/>
</dbReference>
<dbReference type="GeneID" id="179877"/>
<dbReference type="KEGG" id="cel:CELE_F55B12.1"/>
<dbReference type="UCSC" id="F55B12.1">
    <property type="organism name" value="c. elegans"/>
</dbReference>
<dbReference type="AGR" id="WB:WBGene00000447"/>
<dbReference type="CTD" id="179877"/>
<dbReference type="WormBase" id="F55B12.1">
    <property type="protein sequence ID" value="CE25006"/>
    <property type="gene ID" value="WBGene00000447"/>
    <property type="gene designation" value="ceh-24"/>
</dbReference>
<dbReference type="eggNOG" id="KOG0842">
    <property type="taxonomic scope" value="Eukaryota"/>
</dbReference>
<dbReference type="GeneTree" id="ENSGT00940000168126"/>
<dbReference type="HOGENOM" id="CLU_918976_0_0_1"/>
<dbReference type="InParanoid" id="Q9NLC2"/>
<dbReference type="OMA" id="SAINHQF"/>
<dbReference type="OrthoDB" id="3137333at2759"/>
<dbReference type="PhylomeDB" id="Q9NLC2"/>
<dbReference type="SignaLink" id="Q9NLC2"/>
<dbReference type="PRO" id="PR:Q9NLC2"/>
<dbReference type="Proteomes" id="UP000001940">
    <property type="component" value="Chromosome V"/>
</dbReference>
<dbReference type="Bgee" id="WBGene00000447">
    <property type="expression patterns" value="Expressed in organism subdivision and 9 other cell types or tissues"/>
</dbReference>
<dbReference type="GO" id="GO:0005634">
    <property type="term" value="C:nucleus"/>
    <property type="evidence" value="ECO:0000250"/>
    <property type="project" value="WormBase"/>
</dbReference>
<dbReference type="GO" id="GO:0000981">
    <property type="term" value="F:DNA-binding transcription factor activity, RNA polymerase II-specific"/>
    <property type="evidence" value="ECO:0000250"/>
    <property type="project" value="WormBase"/>
</dbReference>
<dbReference type="GO" id="GO:0000978">
    <property type="term" value="F:RNA polymerase II cis-regulatory region sequence-specific DNA binding"/>
    <property type="evidence" value="ECO:0000318"/>
    <property type="project" value="GO_Central"/>
</dbReference>
<dbReference type="GO" id="GO:0030154">
    <property type="term" value="P:cell differentiation"/>
    <property type="evidence" value="ECO:0000318"/>
    <property type="project" value="GO_Central"/>
</dbReference>
<dbReference type="GO" id="GO:0007399">
    <property type="term" value="P:nervous system development"/>
    <property type="evidence" value="ECO:0007669"/>
    <property type="project" value="UniProtKB-KW"/>
</dbReference>
<dbReference type="GO" id="GO:0006357">
    <property type="term" value="P:regulation of transcription by RNA polymerase II"/>
    <property type="evidence" value="ECO:0000318"/>
    <property type="project" value="GO_Central"/>
</dbReference>
<dbReference type="GO" id="GO:0034243">
    <property type="term" value="P:regulation of transcription elongation by RNA polymerase II"/>
    <property type="evidence" value="ECO:0000250"/>
    <property type="project" value="WormBase"/>
</dbReference>
<dbReference type="CDD" id="cd00086">
    <property type="entry name" value="homeodomain"/>
    <property type="match status" value="1"/>
</dbReference>
<dbReference type="FunFam" id="1.10.10.60:FF:000296">
    <property type="entry name" value="Scarecrow, isoform A"/>
    <property type="match status" value="1"/>
</dbReference>
<dbReference type="Gene3D" id="1.10.10.60">
    <property type="entry name" value="Homeodomain-like"/>
    <property type="match status" value="1"/>
</dbReference>
<dbReference type="InterPro" id="IPR001356">
    <property type="entry name" value="HD"/>
</dbReference>
<dbReference type="InterPro" id="IPR020479">
    <property type="entry name" value="HD_metazoa"/>
</dbReference>
<dbReference type="InterPro" id="IPR017970">
    <property type="entry name" value="Homeobox_CS"/>
</dbReference>
<dbReference type="InterPro" id="IPR050394">
    <property type="entry name" value="Homeobox_NK-like"/>
</dbReference>
<dbReference type="InterPro" id="IPR009057">
    <property type="entry name" value="Homeodomain-like_sf"/>
</dbReference>
<dbReference type="PANTHER" id="PTHR24340">
    <property type="entry name" value="HOMEOBOX PROTEIN NKX"/>
    <property type="match status" value="1"/>
</dbReference>
<dbReference type="PANTHER" id="PTHR24340:SF41">
    <property type="entry name" value="MUSCLE-SPECIFIC HOMEOBOX PROTEIN TINMAN-RELATED"/>
    <property type="match status" value="1"/>
</dbReference>
<dbReference type="Pfam" id="PF00046">
    <property type="entry name" value="Homeodomain"/>
    <property type="match status" value="1"/>
</dbReference>
<dbReference type="PRINTS" id="PR00024">
    <property type="entry name" value="HOMEOBOX"/>
</dbReference>
<dbReference type="SMART" id="SM00389">
    <property type="entry name" value="HOX"/>
    <property type="match status" value="1"/>
</dbReference>
<dbReference type="SUPFAM" id="SSF46689">
    <property type="entry name" value="Homeodomain-like"/>
    <property type="match status" value="1"/>
</dbReference>
<dbReference type="PROSITE" id="PS00027">
    <property type="entry name" value="HOMEOBOX_1"/>
    <property type="match status" value="1"/>
</dbReference>
<dbReference type="PROSITE" id="PS50071">
    <property type="entry name" value="HOMEOBOX_2"/>
    <property type="match status" value="1"/>
</dbReference>
<protein>
    <recommendedName>
        <fullName>Homeobox protein ceh-24</fullName>
    </recommendedName>
</protein>
<organism>
    <name type="scientific">Caenorhabditis elegans</name>
    <dbReference type="NCBI Taxonomy" id="6239"/>
    <lineage>
        <taxon>Eukaryota</taxon>
        <taxon>Metazoa</taxon>
        <taxon>Ecdysozoa</taxon>
        <taxon>Nematoda</taxon>
        <taxon>Chromadorea</taxon>
        <taxon>Rhabditida</taxon>
        <taxon>Rhabditina</taxon>
        <taxon>Rhabditomorpha</taxon>
        <taxon>Rhabditoidea</taxon>
        <taxon>Rhabditidae</taxon>
        <taxon>Peloderinae</taxon>
        <taxon>Caenorhabditis</taxon>
    </lineage>
</organism>